<comment type="function">
    <text evidence="2">Component of the cytochrome c oxidase, the last enzyme in the mitochondrial electron transport chain which drives oxidative phosphorylation. The respiratory chain contains 3 multisubunit complexes succinate dehydrogenase (complex II, CII), ubiquinol-cytochrome c oxidoreductase (cytochrome b-c1 complex, complex III, CIII) and cytochrome c oxidase (complex IV, CIV), that cooperate to transfer electrons derived from NADH and succinate to molecular oxygen, creating an electrochemical gradient over the inner membrane that drives transmembrane transport and the ATP synthase. Cytochrome c oxidase is the component of the respiratory chain that catalyzes the reduction of oxygen to water. Electrons originating from reduced cytochrome c in the intermembrane space (IMS) are transferred via the dinuclear copper A center (CU(A)) of subunit 2 and heme A of subunit 1 to the active site in subunit 1, a binuclear center (BNC) formed by heme A3 and copper B (CU(B)). The BNC reduces molecular oxygen to 2 water molecules using 4 electrons from cytochrome c in the IMS and 4 protons from the mitochondrial matrix.</text>
</comment>
<comment type="catalytic activity">
    <reaction evidence="2">
        <text>4 Fe(II)-[cytochrome c] + O2 + 8 H(+)(in) = 4 Fe(III)-[cytochrome c] + 2 H2O + 4 H(+)(out)</text>
        <dbReference type="Rhea" id="RHEA:11436"/>
        <dbReference type="Rhea" id="RHEA-COMP:10350"/>
        <dbReference type="Rhea" id="RHEA-COMP:14399"/>
        <dbReference type="ChEBI" id="CHEBI:15377"/>
        <dbReference type="ChEBI" id="CHEBI:15378"/>
        <dbReference type="ChEBI" id="CHEBI:15379"/>
        <dbReference type="ChEBI" id="CHEBI:29033"/>
        <dbReference type="ChEBI" id="CHEBI:29034"/>
        <dbReference type="EC" id="7.1.1.9"/>
    </reaction>
    <physiologicalReaction direction="left-to-right" evidence="2">
        <dbReference type="Rhea" id="RHEA:11437"/>
    </physiologicalReaction>
</comment>
<comment type="cofactor">
    <cofactor evidence="2">
        <name>heme</name>
        <dbReference type="ChEBI" id="CHEBI:30413"/>
    </cofactor>
    <text evidence="2">Binds 2 heme A groups non-covalently per subunit.</text>
</comment>
<comment type="cofactor">
    <cofactor evidence="2">
        <name>Cu cation</name>
        <dbReference type="ChEBI" id="CHEBI:23378"/>
    </cofactor>
    <text evidence="2">Binds a copper B center.</text>
</comment>
<comment type="pathway">
    <text evidence="2">Energy metabolism; oxidative phosphorylation.</text>
</comment>
<comment type="subunit">
    <text evidence="2">Component of the cytochrome c oxidase (complex IV, CIV), a multisubunit enzyme composed of a catalytic core of 3 subunits and several supernumerary subunits. The complex exists as a monomer or a dimer and forms supercomplexes (SCs) in the inner mitochondrial membrane with ubiquinol-cytochrome c oxidoreductase (cytochrome b-c1 complex, complex III, CIII).</text>
</comment>
<comment type="subcellular location">
    <subcellularLocation>
        <location evidence="2">Mitochondrion inner membrane</location>
        <topology evidence="2">Multi-pass membrane protein</topology>
    </subcellularLocation>
</comment>
<comment type="similarity">
    <text evidence="4">Belongs to the heme-copper respiratory oxidase family.</text>
</comment>
<comment type="caution">
    <text evidence="4">There is no mitochondrial-type translation initiation codon present in frame in the sequence. In PubMed:19533212, the authors suggest the presence of a novel start codon coding for either Pro or Ser in Drosophila CoI transcripts.</text>
</comment>
<feature type="chain" id="PRO_0000183329" description="Cytochrome c oxidase subunit 1">
    <location>
        <begin position="1"/>
        <end position="511"/>
    </location>
</feature>
<feature type="transmembrane region" description="Helical" evidence="3">
    <location>
        <begin position="15"/>
        <end position="35"/>
    </location>
</feature>
<feature type="transmembrane region" description="Helical" evidence="3">
    <location>
        <begin position="54"/>
        <end position="74"/>
    </location>
</feature>
<feature type="transmembrane region" description="Helical" evidence="3">
    <location>
        <begin position="100"/>
        <end position="120"/>
    </location>
</feature>
<feature type="transmembrane region" description="Helical" evidence="3">
    <location>
        <begin position="143"/>
        <end position="163"/>
    </location>
</feature>
<feature type="transmembrane region" description="Helical" evidence="3">
    <location>
        <begin position="181"/>
        <end position="201"/>
    </location>
</feature>
<feature type="transmembrane region" description="Helical" evidence="3">
    <location>
        <begin position="232"/>
        <end position="252"/>
    </location>
</feature>
<feature type="transmembrane region" description="Helical" evidence="3">
    <location>
        <begin position="266"/>
        <end position="286"/>
    </location>
</feature>
<feature type="transmembrane region" description="Helical" evidence="3">
    <location>
        <begin position="303"/>
        <end position="323"/>
    </location>
</feature>
<feature type="transmembrane region" description="Helical" evidence="3">
    <location>
        <begin position="336"/>
        <end position="356"/>
    </location>
</feature>
<feature type="transmembrane region" description="Helical" evidence="3">
    <location>
        <begin position="378"/>
        <end position="398"/>
    </location>
</feature>
<feature type="transmembrane region" description="Helical" evidence="3">
    <location>
        <begin position="412"/>
        <end position="432"/>
    </location>
</feature>
<feature type="transmembrane region" description="Helical" evidence="3">
    <location>
        <begin position="450"/>
        <end position="470"/>
    </location>
</feature>
<feature type="binding site" evidence="2">
    <location>
        <position position="38"/>
    </location>
    <ligand>
        <name>Ca(2+)</name>
        <dbReference type="ChEBI" id="CHEBI:29108"/>
    </ligand>
</feature>
<feature type="binding site" evidence="2">
    <location>
        <position position="43"/>
    </location>
    <ligand>
        <name>Ca(2+)</name>
        <dbReference type="ChEBI" id="CHEBI:29108"/>
    </ligand>
</feature>
<feature type="binding site" description="axial binding residue" evidence="2">
    <location>
        <position position="59"/>
    </location>
    <ligand>
        <name>Fe(II)-heme a</name>
        <dbReference type="ChEBI" id="CHEBI:61715"/>
        <note>low-spin</note>
    </ligand>
    <ligandPart>
        <name>Fe</name>
        <dbReference type="ChEBI" id="CHEBI:18248"/>
    </ligandPart>
</feature>
<feature type="binding site" evidence="2">
    <location>
        <position position="238"/>
    </location>
    <ligand>
        <name>Cu cation</name>
        <dbReference type="ChEBI" id="CHEBI:23378"/>
        <label>B</label>
    </ligand>
</feature>
<feature type="binding site" evidence="1">
    <location>
        <position position="242"/>
    </location>
    <ligand>
        <name>O2</name>
        <dbReference type="ChEBI" id="CHEBI:15379"/>
    </ligand>
</feature>
<feature type="binding site" evidence="2">
    <location>
        <position position="288"/>
    </location>
    <ligand>
        <name>Cu cation</name>
        <dbReference type="ChEBI" id="CHEBI:23378"/>
        <label>B</label>
    </ligand>
</feature>
<feature type="binding site" evidence="2">
    <location>
        <position position="289"/>
    </location>
    <ligand>
        <name>Cu cation</name>
        <dbReference type="ChEBI" id="CHEBI:23378"/>
        <label>B</label>
    </ligand>
</feature>
<feature type="binding site" evidence="2">
    <location>
        <position position="366"/>
    </location>
    <ligand>
        <name>Mg(2+)</name>
        <dbReference type="ChEBI" id="CHEBI:18420"/>
        <note>ligand shared with subunit 2</note>
    </ligand>
</feature>
<feature type="binding site" evidence="2">
    <location>
        <position position="367"/>
    </location>
    <ligand>
        <name>Mg(2+)</name>
        <dbReference type="ChEBI" id="CHEBI:18420"/>
        <note>ligand shared with subunit 2</note>
    </ligand>
</feature>
<feature type="binding site" description="axial binding residue" evidence="2">
    <location>
        <position position="374"/>
    </location>
    <ligand>
        <name>heme a3</name>
        <dbReference type="ChEBI" id="CHEBI:83282"/>
        <note>high-spin</note>
    </ligand>
    <ligandPart>
        <name>Fe</name>
        <dbReference type="ChEBI" id="CHEBI:18248"/>
    </ligandPart>
</feature>
<feature type="binding site" description="axial binding residue" evidence="2">
    <location>
        <position position="376"/>
    </location>
    <ligand>
        <name>Fe(II)-heme a</name>
        <dbReference type="ChEBI" id="CHEBI:61715"/>
        <note>low-spin</note>
    </ligand>
    <ligandPart>
        <name>Fe</name>
        <dbReference type="ChEBI" id="CHEBI:18248"/>
    </ligandPart>
</feature>
<feature type="cross-link" description="1'-histidyl-3'-tyrosine (His-Tyr)" evidence="2">
    <location>
        <begin position="238"/>
        <end position="242"/>
    </location>
</feature>
<evidence type="ECO:0000250" key="1">
    <source>
        <dbReference type="UniProtKB" id="P00396"/>
    </source>
</evidence>
<evidence type="ECO:0000250" key="2">
    <source>
        <dbReference type="UniProtKB" id="P00401"/>
    </source>
</evidence>
<evidence type="ECO:0000255" key="3"/>
<evidence type="ECO:0000305" key="4"/>
<name>COX1_DROYA</name>
<reference key="1">
    <citation type="journal article" date="1983" name="Nucleic Acids Res.">
        <title>Genes for cytochrome c oxidase subunit I, URF2, and three tRNAs in Drosophila mitochondrial DNA.</title>
        <authorList>
            <person name="Clary D.O."/>
            <person name="Wolstenholme D.R."/>
        </authorList>
    </citation>
    <scope>NUCLEOTIDE SEQUENCE [GENOMIC DNA]</scope>
</reference>
<reference key="2">
    <citation type="journal article" date="1985" name="J. Mol. Evol.">
        <title>The mitochondrial DNA molecular of Drosophila yakuba: nucleotide sequence, gene organization, and genetic code.</title>
        <authorList>
            <person name="Clary D.O."/>
            <person name="Wolstenholme D.R."/>
        </authorList>
    </citation>
    <scope>NUCLEOTIDE SEQUENCE [LARGE SCALE GENOMIC DNA]</scope>
    <source>
        <strain>2317.6 Ivory Coast</strain>
    </source>
</reference>
<reference key="3">
    <citation type="journal article" date="2009" name="J. Mol. Evol.">
        <title>Comparative genomics of Drosophila mtDNA: Novel features of conservation and change across functional domains and lineages.</title>
        <authorList>
            <person name="Montooth K.L."/>
            <person name="Abt D.N."/>
            <person name="Hofmann J.W."/>
            <person name="Rand D.M."/>
        </authorList>
    </citation>
    <scope>IDENTIFICATION OF PROBABLE INITIATION SITE</scope>
</reference>
<sequence>SRQWLFSTNHKDIGTLYFIFGAWAGMVGTSLSILIRAELGHPGALIGDDQIYNVIVTAHAFIMIFFMVMPIMIGGFGNWLVPLMLGAPDMAFPRMNNMSFWLLPPALSLLLVSSMVENGAGTGWTVYPPLSSGIAHGGASVDLAIFSLHLAGISSILGAVNFITTVINMRSTGITLDRMPLFVWSVVITALLLLLSLPVLAGAITMLLTDRNLNTSFFDPAGGGDPILYQHLFWFFGHPEVYILILPGFGMISHIISQESGKKETFGSLGMIYAMLAIGLLGFIVWAHHMFTVGMDVDTRAYFTSATMIIAVPTGIKIFSWLATLHGTQLSYSPAILWALGFVFLFTVGGLTGVVLANSSVDIILHDTYYVVAHFHYVLSMGAVFAIMAGFIHWYPLFTGLTLNNKWLKSQFIIMFIGVNLTFFPQHFLGLAGMPRRYSDYPDAYTTWNVVSTIGSTISLLGILFFFYIIWESLVSQRQVIYPIQLNSSIEWYQNTPPAEHSYSELPLLTN</sequence>
<protein>
    <recommendedName>
        <fullName>Cytochrome c oxidase subunit 1</fullName>
        <ecNumber>7.1.1.9</ecNumber>
    </recommendedName>
    <alternativeName>
        <fullName>Cytochrome c oxidase polypeptide I</fullName>
    </alternativeName>
</protein>
<keyword id="KW-0106">Calcium</keyword>
<keyword id="KW-0186">Copper</keyword>
<keyword id="KW-0249">Electron transport</keyword>
<keyword id="KW-0349">Heme</keyword>
<keyword id="KW-0408">Iron</keyword>
<keyword id="KW-0460">Magnesium</keyword>
<keyword id="KW-0472">Membrane</keyword>
<keyword id="KW-0479">Metal-binding</keyword>
<keyword id="KW-0496">Mitochondrion</keyword>
<keyword id="KW-0999">Mitochondrion inner membrane</keyword>
<keyword id="KW-0679">Respiratory chain</keyword>
<keyword id="KW-1278">Translocase</keyword>
<keyword id="KW-0812">Transmembrane</keyword>
<keyword id="KW-1133">Transmembrane helix</keyword>
<keyword id="KW-0813">Transport</keyword>
<organism>
    <name type="scientific">Drosophila yakuba</name>
    <name type="common">Fruit fly</name>
    <dbReference type="NCBI Taxonomy" id="7245"/>
    <lineage>
        <taxon>Eukaryota</taxon>
        <taxon>Metazoa</taxon>
        <taxon>Ecdysozoa</taxon>
        <taxon>Arthropoda</taxon>
        <taxon>Hexapoda</taxon>
        <taxon>Insecta</taxon>
        <taxon>Pterygota</taxon>
        <taxon>Neoptera</taxon>
        <taxon>Endopterygota</taxon>
        <taxon>Diptera</taxon>
        <taxon>Brachycera</taxon>
        <taxon>Muscomorpha</taxon>
        <taxon>Ephydroidea</taxon>
        <taxon>Drosophilidae</taxon>
        <taxon>Drosophila</taxon>
        <taxon>Sophophora</taxon>
    </lineage>
</organism>
<geneLocation type="mitochondrion"/>
<dbReference type="EC" id="7.1.1.9"/>
<dbReference type="EMBL" id="X03240">
    <property type="protein sequence ID" value="CAC14066.1"/>
    <property type="molecule type" value="Genomic_DNA"/>
</dbReference>
<dbReference type="PIR" id="A93488">
    <property type="entry name" value="ODFF1Y"/>
</dbReference>
<dbReference type="SMR" id="P00400"/>
<dbReference type="EnsemblMetazoa" id="GeneID_807622_df_mr">
    <property type="protein sequence ID" value="NP_006903.1"/>
    <property type="gene ID" value="GeneID_807622"/>
</dbReference>
<dbReference type="KEGG" id="dya:COX1"/>
<dbReference type="CTD" id="4512"/>
<dbReference type="OrthoDB" id="10002679at2759"/>
<dbReference type="UniPathway" id="UPA00705"/>
<dbReference type="ChiTaRS" id="COX1">
    <property type="organism name" value="fly"/>
</dbReference>
<dbReference type="Proteomes" id="UP000002282">
    <property type="component" value="Mitochondrion"/>
</dbReference>
<dbReference type="GO" id="GO:0005743">
    <property type="term" value="C:mitochondrial inner membrane"/>
    <property type="evidence" value="ECO:0007669"/>
    <property type="project" value="UniProtKB-SubCell"/>
</dbReference>
<dbReference type="GO" id="GO:0045277">
    <property type="term" value="C:respiratory chain complex IV"/>
    <property type="evidence" value="ECO:0007669"/>
    <property type="project" value="EnsemblMetazoa"/>
</dbReference>
<dbReference type="GO" id="GO:0004129">
    <property type="term" value="F:cytochrome-c oxidase activity"/>
    <property type="evidence" value="ECO:0007669"/>
    <property type="project" value="UniProtKB-EC"/>
</dbReference>
<dbReference type="GO" id="GO:0020037">
    <property type="term" value="F:heme binding"/>
    <property type="evidence" value="ECO:0007669"/>
    <property type="project" value="InterPro"/>
</dbReference>
<dbReference type="GO" id="GO:0046872">
    <property type="term" value="F:metal ion binding"/>
    <property type="evidence" value="ECO:0007669"/>
    <property type="project" value="UniProtKB-KW"/>
</dbReference>
<dbReference type="GO" id="GO:0015990">
    <property type="term" value="P:electron transport coupled proton transport"/>
    <property type="evidence" value="ECO:0007669"/>
    <property type="project" value="TreeGrafter"/>
</dbReference>
<dbReference type="GO" id="GO:0006123">
    <property type="term" value="P:mitochondrial electron transport, cytochrome c to oxygen"/>
    <property type="evidence" value="ECO:0007669"/>
    <property type="project" value="EnsemblMetazoa"/>
</dbReference>
<dbReference type="CDD" id="cd01663">
    <property type="entry name" value="Cyt_c_Oxidase_I"/>
    <property type="match status" value="1"/>
</dbReference>
<dbReference type="FunFam" id="1.20.210.10:FF:000001">
    <property type="entry name" value="Cytochrome c oxidase subunit 1"/>
    <property type="match status" value="1"/>
</dbReference>
<dbReference type="Gene3D" id="1.20.210.10">
    <property type="entry name" value="Cytochrome c oxidase-like, subunit I domain"/>
    <property type="match status" value="1"/>
</dbReference>
<dbReference type="InterPro" id="IPR023616">
    <property type="entry name" value="Cyt_c_oxase-like_su1_dom"/>
</dbReference>
<dbReference type="InterPro" id="IPR036927">
    <property type="entry name" value="Cyt_c_oxase-like_su1_sf"/>
</dbReference>
<dbReference type="InterPro" id="IPR000883">
    <property type="entry name" value="Cyt_C_Oxase_1"/>
</dbReference>
<dbReference type="InterPro" id="IPR023615">
    <property type="entry name" value="Cyt_c_Oxase_su1_BS"/>
</dbReference>
<dbReference type="InterPro" id="IPR033944">
    <property type="entry name" value="Cyt_c_oxase_su1_dom"/>
</dbReference>
<dbReference type="PANTHER" id="PTHR10422">
    <property type="entry name" value="CYTOCHROME C OXIDASE SUBUNIT 1"/>
    <property type="match status" value="1"/>
</dbReference>
<dbReference type="PANTHER" id="PTHR10422:SF18">
    <property type="entry name" value="CYTOCHROME C OXIDASE SUBUNIT 1"/>
    <property type="match status" value="1"/>
</dbReference>
<dbReference type="Pfam" id="PF00115">
    <property type="entry name" value="COX1"/>
    <property type="match status" value="1"/>
</dbReference>
<dbReference type="PRINTS" id="PR01165">
    <property type="entry name" value="CYCOXIDASEI"/>
</dbReference>
<dbReference type="SUPFAM" id="SSF81442">
    <property type="entry name" value="Cytochrome c oxidase subunit I-like"/>
    <property type="match status" value="1"/>
</dbReference>
<dbReference type="PROSITE" id="PS50855">
    <property type="entry name" value="COX1"/>
    <property type="match status" value="1"/>
</dbReference>
<dbReference type="PROSITE" id="PS00077">
    <property type="entry name" value="COX1_CUB"/>
    <property type="match status" value="1"/>
</dbReference>
<proteinExistence type="inferred from homology"/>
<accession>P00400</accession>
<gene>
    <name type="primary">mt:CoI</name>
    <name type="synonym">CoI</name>
</gene>